<name>GCS23_RUBXD</name>
<feature type="chain" id="PRO_0000255812" description="Putative glutamate--cysteine ligase 2-3">
    <location>
        <begin position="1"/>
        <end position="363"/>
    </location>
</feature>
<sequence length="363" mass="39643">METRFGASPPYTVGVEEEFQLIDPRTRALTPKIEEVLAAGDGELPEGTLASELSASCLEVRTPAYASVAELARALPALRARVRRLAERSGARLVSAGAHPFSPAAEQPITGKPRYRKVDEEMGWPARMQAIYGLHVHVAVPGGEEAVRAVSALARHVPLFIALSANSPFWEGRDTRLASVRAKVFGLIPRSGLPPRFASWEEFVRHVERLVRAGSIRDYTFCWWDVRPHPKLGTVELRAPDAQTDPGRTAALAALCQCLAAAAEEFEPEDPLLTEENKWRATRHGLEAELYDFSGQRTVAARRAAEELVGRLLPVARELGCEAELEGVLEISRSATGADRQRAVLAREGSLKSVVDYLAEATA</sequence>
<comment type="function">
    <text evidence="1">ATP-dependent carboxylate-amine ligase which exhibits weak glutamate--cysteine ligase activity.</text>
</comment>
<comment type="catalytic activity">
    <reaction evidence="1">
        <text>L-cysteine + L-glutamate + ATP = gamma-L-glutamyl-L-cysteine + ADP + phosphate + H(+)</text>
        <dbReference type="Rhea" id="RHEA:13285"/>
        <dbReference type="ChEBI" id="CHEBI:15378"/>
        <dbReference type="ChEBI" id="CHEBI:29985"/>
        <dbReference type="ChEBI" id="CHEBI:30616"/>
        <dbReference type="ChEBI" id="CHEBI:35235"/>
        <dbReference type="ChEBI" id="CHEBI:43474"/>
        <dbReference type="ChEBI" id="CHEBI:58173"/>
        <dbReference type="ChEBI" id="CHEBI:456216"/>
        <dbReference type="EC" id="6.3.2.2"/>
    </reaction>
</comment>
<comment type="similarity">
    <text evidence="1">Belongs to the glutamate--cysteine ligase type 2 family. YbdK subfamily.</text>
</comment>
<organism>
    <name type="scientific">Rubrobacter xylanophilus (strain DSM 9941 / JCM 11954 / NBRC 16129 / PRD-1)</name>
    <dbReference type="NCBI Taxonomy" id="266117"/>
    <lineage>
        <taxon>Bacteria</taxon>
        <taxon>Bacillati</taxon>
        <taxon>Actinomycetota</taxon>
        <taxon>Rubrobacteria</taxon>
        <taxon>Rubrobacterales</taxon>
        <taxon>Rubrobacteraceae</taxon>
        <taxon>Rubrobacter</taxon>
    </lineage>
</organism>
<gene>
    <name type="ordered locus">Rxyl_1350</name>
</gene>
<reference key="1">
    <citation type="submission" date="2006-06" db="EMBL/GenBank/DDBJ databases">
        <title>Complete sequence of Rubrobacter xylanophilus DSM 9941.</title>
        <authorList>
            <consortium name="US DOE Joint Genome Institute"/>
            <person name="Copeland A."/>
            <person name="Lucas S."/>
            <person name="Lapidus A."/>
            <person name="Barry K."/>
            <person name="Detter J.C."/>
            <person name="Glavina del Rio T."/>
            <person name="Hammon N."/>
            <person name="Israni S."/>
            <person name="Dalin E."/>
            <person name="Tice H."/>
            <person name="Pitluck S."/>
            <person name="Munk A.C."/>
            <person name="Brettin T."/>
            <person name="Bruce D."/>
            <person name="Han C."/>
            <person name="Tapia R."/>
            <person name="Gilna P."/>
            <person name="Schmutz J."/>
            <person name="Larimer F."/>
            <person name="Land M."/>
            <person name="Hauser L."/>
            <person name="Kyrpides N."/>
            <person name="Lykidis A."/>
            <person name="da Costa M.S."/>
            <person name="Rainey F.A."/>
            <person name="Empadinhas N."/>
            <person name="Jolivet E."/>
            <person name="Battista J.R."/>
            <person name="Richardson P."/>
        </authorList>
    </citation>
    <scope>NUCLEOTIDE SEQUENCE [LARGE SCALE GENOMIC DNA]</scope>
    <source>
        <strain>DSM 9941 / JCM 11954 / NBRC 16129 / PRD-1</strain>
    </source>
</reference>
<proteinExistence type="inferred from homology"/>
<protein>
    <recommendedName>
        <fullName evidence="1">Putative glutamate--cysteine ligase 2-3</fullName>
        <ecNumber evidence="1">6.3.2.2</ecNumber>
    </recommendedName>
    <alternativeName>
        <fullName evidence="1">Gamma-glutamylcysteine synthetase 2-3</fullName>
        <shortName evidence="1">GCS 2-3</shortName>
        <shortName evidence="1">Gamma-GCS 2-3</shortName>
    </alternativeName>
</protein>
<dbReference type="EC" id="6.3.2.2" evidence="1"/>
<dbReference type="EMBL" id="CP000386">
    <property type="protein sequence ID" value="ABG04313.1"/>
    <property type="molecule type" value="Genomic_DNA"/>
</dbReference>
<dbReference type="RefSeq" id="WP_011564330.1">
    <property type="nucleotide sequence ID" value="NC_008148.1"/>
</dbReference>
<dbReference type="SMR" id="Q1AWB5"/>
<dbReference type="STRING" id="266117.Rxyl_1350"/>
<dbReference type="KEGG" id="rxy:Rxyl_1350"/>
<dbReference type="eggNOG" id="COG2170">
    <property type="taxonomic scope" value="Bacteria"/>
</dbReference>
<dbReference type="HOGENOM" id="CLU_044848_1_0_11"/>
<dbReference type="OrthoDB" id="9769628at2"/>
<dbReference type="PhylomeDB" id="Q1AWB5"/>
<dbReference type="Proteomes" id="UP000006637">
    <property type="component" value="Chromosome"/>
</dbReference>
<dbReference type="GO" id="GO:0005524">
    <property type="term" value="F:ATP binding"/>
    <property type="evidence" value="ECO:0007669"/>
    <property type="project" value="UniProtKB-KW"/>
</dbReference>
<dbReference type="GO" id="GO:0004357">
    <property type="term" value="F:glutamate-cysteine ligase activity"/>
    <property type="evidence" value="ECO:0007669"/>
    <property type="project" value="UniProtKB-EC"/>
</dbReference>
<dbReference type="GO" id="GO:0042398">
    <property type="term" value="P:modified amino acid biosynthetic process"/>
    <property type="evidence" value="ECO:0007669"/>
    <property type="project" value="InterPro"/>
</dbReference>
<dbReference type="Gene3D" id="3.30.590.20">
    <property type="match status" value="1"/>
</dbReference>
<dbReference type="HAMAP" id="MF_01609">
    <property type="entry name" value="Glu_cys_ligase_2"/>
    <property type="match status" value="1"/>
</dbReference>
<dbReference type="InterPro" id="IPR050141">
    <property type="entry name" value="GCL_type2/YbdK_subfam"/>
</dbReference>
<dbReference type="InterPro" id="IPR006336">
    <property type="entry name" value="GCS2"/>
</dbReference>
<dbReference type="InterPro" id="IPR014746">
    <property type="entry name" value="Gln_synth/guanido_kin_cat_dom"/>
</dbReference>
<dbReference type="InterPro" id="IPR011793">
    <property type="entry name" value="YbdK"/>
</dbReference>
<dbReference type="NCBIfam" id="TIGR02050">
    <property type="entry name" value="gshA_cyan_rel"/>
    <property type="match status" value="1"/>
</dbReference>
<dbReference type="NCBIfam" id="NF010043">
    <property type="entry name" value="PRK13517.1-3"/>
    <property type="match status" value="1"/>
</dbReference>
<dbReference type="PANTHER" id="PTHR36510">
    <property type="entry name" value="GLUTAMATE--CYSTEINE LIGASE 2-RELATED"/>
    <property type="match status" value="1"/>
</dbReference>
<dbReference type="PANTHER" id="PTHR36510:SF1">
    <property type="entry name" value="GLUTAMATE--CYSTEINE LIGASE 2-RELATED"/>
    <property type="match status" value="1"/>
</dbReference>
<dbReference type="Pfam" id="PF04107">
    <property type="entry name" value="GCS2"/>
    <property type="match status" value="1"/>
</dbReference>
<dbReference type="SUPFAM" id="SSF55931">
    <property type="entry name" value="Glutamine synthetase/guanido kinase"/>
    <property type="match status" value="1"/>
</dbReference>
<accession>Q1AWB5</accession>
<keyword id="KW-0067">ATP-binding</keyword>
<keyword id="KW-0436">Ligase</keyword>
<keyword id="KW-0547">Nucleotide-binding</keyword>
<keyword id="KW-1185">Reference proteome</keyword>
<evidence type="ECO:0000255" key="1">
    <source>
        <dbReference type="HAMAP-Rule" id="MF_01609"/>
    </source>
</evidence>